<protein>
    <recommendedName>
        <fullName>Guanine nucleotide-binding protein G(I)/G(S)/G(O) subunit gamma-T2</fullName>
    </recommendedName>
    <alternativeName>
        <fullName>G gamma-C</fullName>
    </alternativeName>
    <alternativeName>
        <fullName>G-gamma-8</fullName>
    </alternativeName>
</protein>
<gene>
    <name type="primary">GNGT2</name>
    <name type="synonym">GNG8</name>
    <name type="synonym">GNGT8</name>
</gene>
<reference key="1">
    <citation type="journal article" date="1995" name="J. Biol. Chem.">
        <title>Molecular cloning and characterization of the G protein gamma subunit of cone photoreceptors.</title>
        <authorList>
            <person name="Ong O.C."/>
            <person name="Yamane H.K."/>
            <person name="Phan K.B."/>
            <person name="Fong H.K."/>
            <person name="Bok D."/>
            <person name="Lee R.H."/>
            <person name="Fung B.K.-K."/>
        </authorList>
    </citation>
    <scope>NUCLEOTIDE SEQUENCE [MRNA]</scope>
    <source>
        <tissue>Retina</tissue>
    </source>
</reference>
<reference key="2">
    <citation type="submission" date="2007-06" db="EMBL/GenBank/DDBJ databases">
        <authorList>
            <consortium name="NIH - Mammalian Gene Collection (MGC) project"/>
        </authorList>
    </citation>
    <scope>NUCLEOTIDE SEQUENCE [LARGE SCALE MRNA]</scope>
    <source>
        <strain>Hereford</strain>
        <tissue>Hypothalamus</tissue>
    </source>
</reference>
<dbReference type="EMBL" id="U20085">
    <property type="protein sequence ID" value="AAB61306.1"/>
    <property type="molecule type" value="mRNA"/>
</dbReference>
<dbReference type="EMBL" id="BC147970">
    <property type="protein sequence ID" value="AAI47971.1"/>
    <property type="molecule type" value="mRNA"/>
</dbReference>
<dbReference type="PIR" id="A56378">
    <property type="entry name" value="A56378"/>
</dbReference>
<dbReference type="RefSeq" id="NP_776753.1">
    <property type="nucleotide sequence ID" value="NM_174328.2"/>
</dbReference>
<dbReference type="RefSeq" id="XP_005220538.1">
    <property type="nucleotide sequence ID" value="XM_005220481.5"/>
</dbReference>
<dbReference type="RefSeq" id="XP_010814418.1">
    <property type="nucleotide sequence ID" value="XM_010816116.2"/>
</dbReference>
<dbReference type="SMR" id="P50154"/>
<dbReference type="FunCoup" id="P50154">
    <property type="interactions" value="616"/>
</dbReference>
<dbReference type="STRING" id="9913.ENSBTAP00000054464"/>
<dbReference type="PaxDb" id="9913-ENSBTAP00000054464"/>
<dbReference type="Ensembl" id="ENSBTAT00000092606.1">
    <property type="protein sequence ID" value="ENSBTAP00000095851.1"/>
    <property type="gene ID" value="ENSBTAG00000065487.1"/>
</dbReference>
<dbReference type="GeneID" id="281797"/>
<dbReference type="KEGG" id="bta:281797"/>
<dbReference type="CTD" id="2793"/>
<dbReference type="VEuPathDB" id="HostDB:ENSBTAG00000047325"/>
<dbReference type="eggNOG" id="KOG4119">
    <property type="taxonomic scope" value="Eukaryota"/>
</dbReference>
<dbReference type="GeneTree" id="ENSGT01100000263525"/>
<dbReference type="HOGENOM" id="CLU_168377_2_1_1"/>
<dbReference type="InParanoid" id="P50154"/>
<dbReference type="OMA" id="SWLEIAW"/>
<dbReference type="OrthoDB" id="9933679at2759"/>
<dbReference type="TreeFam" id="TF319909"/>
<dbReference type="Reactome" id="R-BTA-1296041">
    <property type="pathway name" value="Activation of G protein gated Potassium channels"/>
</dbReference>
<dbReference type="Reactome" id="R-BTA-202040">
    <property type="pathway name" value="G-protein activation"/>
</dbReference>
<dbReference type="Reactome" id="R-BTA-381676">
    <property type="pathway name" value="Glucagon-like Peptide-1 (GLP1) regulates insulin secretion"/>
</dbReference>
<dbReference type="Reactome" id="R-BTA-392170">
    <property type="pathway name" value="ADP signalling through P2Y purinoceptor 12"/>
</dbReference>
<dbReference type="Reactome" id="R-BTA-392451">
    <property type="pathway name" value="G beta:gamma signalling through PI3Kgamma"/>
</dbReference>
<dbReference type="Reactome" id="R-BTA-392851">
    <property type="pathway name" value="Prostacyclin signalling through prostacyclin receptor"/>
</dbReference>
<dbReference type="Reactome" id="R-BTA-400042">
    <property type="pathway name" value="Adrenaline,noradrenaline inhibits insulin secretion"/>
</dbReference>
<dbReference type="Reactome" id="R-BTA-4086398">
    <property type="pathway name" value="Ca2+ pathway"/>
</dbReference>
<dbReference type="Reactome" id="R-BTA-416476">
    <property type="pathway name" value="G alpha (q) signalling events"/>
</dbReference>
<dbReference type="Reactome" id="R-BTA-416482">
    <property type="pathway name" value="G alpha (12/13) signalling events"/>
</dbReference>
<dbReference type="Reactome" id="R-BTA-418217">
    <property type="pathway name" value="G beta:gamma signalling through PLC beta"/>
</dbReference>
<dbReference type="Reactome" id="R-BTA-418555">
    <property type="pathway name" value="G alpha (s) signalling events"/>
</dbReference>
<dbReference type="Reactome" id="R-BTA-418592">
    <property type="pathway name" value="ADP signalling through P2Y purinoceptor 1"/>
</dbReference>
<dbReference type="Reactome" id="R-BTA-418594">
    <property type="pathway name" value="G alpha (i) signalling events"/>
</dbReference>
<dbReference type="Reactome" id="R-BTA-418597">
    <property type="pathway name" value="G alpha (z) signalling events"/>
</dbReference>
<dbReference type="Reactome" id="R-BTA-420092">
    <property type="pathway name" value="Glucagon-type ligand receptors"/>
</dbReference>
<dbReference type="Reactome" id="R-BTA-428930">
    <property type="pathway name" value="Thromboxane signalling through TP receptor"/>
</dbReference>
<dbReference type="Reactome" id="R-BTA-432040">
    <property type="pathway name" value="Vasopressin regulates renal water homeostasis via Aquaporins"/>
</dbReference>
<dbReference type="Reactome" id="R-BTA-456926">
    <property type="pathway name" value="Thrombin signalling through proteinase activated receptors (PARs)"/>
</dbReference>
<dbReference type="Reactome" id="R-BTA-500657">
    <property type="pathway name" value="Presynaptic function of Kainate receptors"/>
</dbReference>
<dbReference type="Reactome" id="R-BTA-6814122">
    <property type="pathway name" value="Cooperation of PDCL (PhLP1) and TRiC/CCT in G-protein beta folding"/>
</dbReference>
<dbReference type="Reactome" id="R-BTA-8964315">
    <property type="pathway name" value="G beta:gamma signalling through BTK"/>
</dbReference>
<dbReference type="Reactome" id="R-BTA-8964616">
    <property type="pathway name" value="G beta:gamma signalling through CDC42"/>
</dbReference>
<dbReference type="Reactome" id="R-BTA-9009391">
    <property type="pathway name" value="Extra-nuclear estrogen signaling"/>
</dbReference>
<dbReference type="Reactome" id="R-BTA-9856530">
    <property type="pathway name" value="High laminar flow shear stress activates signaling by PIEZO1 and PECAM1:CDH5:KDR in endothelial cells"/>
</dbReference>
<dbReference type="Reactome" id="R-BTA-997272">
    <property type="pathway name" value="Inhibition of voltage gated Ca2+ channels via Gbeta/gamma subunits"/>
</dbReference>
<dbReference type="Proteomes" id="UP000009136">
    <property type="component" value="Chromosome 19"/>
</dbReference>
<dbReference type="Bgee" id="ENSBTAG00000047325">
    <property type="expression patterns" value="Expressed in retina and 75 other cell types or tissues"/>
</dbReference>
<dbReference type="GO" id="GO:0005834">
    <property type="term" value="C:heterotrimeric G-protein complex"/>
    <property type="evidence" value="ECO:0000318"/>
    <property type="project" value="GO_Central"/>
</dbReference>
<dbReference type="GO" id="GO:0031681">
    <property type="term" value="F:G-protein beta-subunit binding"/>
    <property type="evidence" value="ECO:0000318"/>
    <property type="project" value="GO_Central"/>
</dbReference>
<dbReference type="GO" id="GO:0003924">
    <property type="term" value="F:GTPase activity"/>
    <property type="evidence" value="ECO:0007669"/>
    <property type="project" value="Ensembl"/>
</dbReference>
<dbReference type="GO" id="GO:0007186">
    <property type="term" value="P:G protein-coupled receptor signaling pathway"/>
    <property type="evidence" value="ECO:0000318"/>
    <property type="project" value="GO_Central"/>
</dbReference>
<dbReference type="CDD" id="cd00068">
    <property type="entry name" value="GGL"/>
    <property type="match status" value="1"/>
</dbReference>
<dbReference type="FunFam" id="4.10.260.10:FF:000001">
    <property type="entry name" value="Guanine nucleotide-binding protein subunit gamma"/>
    <property type="match status" value="1"/>
</dbReference>
<dbReference type="Gene3D" id="4.10.260.10">
    <property type="entry name" value="Transducin (heterotrimeric G protein), gamma chain"/>
    <property type="match status" value="1"/>
</dbReference>
<dbReference type="InterPro" id="IPR015898">
    <property type="entry name" value="G-protein_gamma-like_dom"/>
</dbReference>
<dbReference type="InterPro" id="IPR036284">
    <property type="entry name" value="GGL_sf"/>
</dbReference>
<dbReference type="InterPro" id="IPR001770">
    <property type="entry name" value="Gprotein-gamma"/>
</dbReference>
<dbReference type="PANTHER" id="PTHR13809">
    <property type="entry name" value="GUANINE NUCLEOTIDE-BINDING PROTEIN GAMMA SUBUNIT"/>
    <property type="match status" value="1"/>
</dbReference>
<dbReference type="Pfam" id="PF00631">
    <property type="entry name" value="G-gamma"/>
    <property type="match status" value="1"/>
</dbReference>
<dbReference type="PRINTS" id="PR00321">
    <property type="entry name" value="GPROTEING"/>
</dbReference>
<dbReference type="SMART" id="SM01224">
    <property type="entry name" value="G_gamma"/>
    <property type="match status" value="1"/>
</dbReference>
<dbReference type="SMART" id="SM00224">
    <property type="entry name" value="GGL"/>
    <property type="match status" value="1"/>
</dbReference>
<dbReference type="SUPFAM" id="SSF48670">
    <property type="entry name" value="Transducin (heterotrimeric G protein), gamma chain"/>
    <property type="match status" value="1"/>
</dbReference>
<dbReference type="PROSITE" id="PS50058">
    <property type="entry name" value="G_PROTEIN_GAMMA"/>
    <property type="match status" value="1"/>
</dbReference>
<proteinExistence type="inferred from homology"/>
<accession>P50154</accession>
<accession>A6QLH8</accession>
<keyword id="KW-1003">Cell membrane</keyword>
<keyword id="KW-0449">Lipoprotein</keyword>
<keyword id="KW-0472">Membrane</keyword>
<keyword id="KW-0488">Methylation</keyword>
<keyword id="KW-0636">Prenylation</keyword>
<keyword id="KW-1185">Reference proteome</keyword>
<keyword id="KW-0807">Transducer</keyword>
<feature type="chain" id="PRO_0000012641" description="Guanine nucleotide-binding protein G(I)/G(S)/G(O) subunit gamma-T2">
    <location>
        <begin position="1"/>
        <end position="66"/>
    </location>
</feature>
<feature type="propeptide" id="PRO_0000012642" description="Removed in mature form" evidence="1">
    <location>
        <begin position="67"/>
        <end position="69"/>
    </location>
</feature>
<feature type="modified residue" description="Cysteine methyl ester" evidence="2">
    <location>
        <position position="66"/>
    </location>
</feature>
<feature type="lipid moiety-binding region" description="S-farnesyl cysteine" evidence="1">
    <location>
        <position position="66"/>
    </location>
</feature>
<organism>
    <name type="scientific">Bos taurus</name>
    <name type="common">Bovine</name>
    <dbReference type="NCBI Taxonomy" id="9913"/>
    <lineage>
        <taxon>Eukaryota</taxon>
        <taxon>Metazoa</taxon>
        <taxon>Chordata</taxon>
        <taxon>Craniata</taxon>
        <taxon>Vertebrata</taxon>
        <taxon>Euteleostomi</taxon>
        <taxon>Mammalia</taxon>
        <taxon>Eutheria</taxon>
        <taxon>Laurasiatheria</taxon>
        <taxon>Artiodactyla</taxon>
        <taxon>Ruminantia</taxon>
        <taxon>Pecora</taxon>
        <taxon>Bovidae</taxon>
        <taxon>Bovinae</taxon>
        <taxon>Bos</taxon>
    </lineage>
</organism>
<evidence type="ECO:0000250" key="1"/>
<evidence type="ECO:0000255" key="2"/>
<evidence type="ECO:0000305" key="3"/>
<sequence length="69" mass="7728">MAQELSEKELLKMEVEQLKKEVKNPRALISKTGKEIKDYVEAEAGNDPLLKGIPEDKNPFKEKGGCIIS</sequence>
<comment type="function">
    <text>Guanine nucleotide-binding proteins (G proteins) are involved as a modulator or transducer in various transmembrane signaling systems. The beta and gamma chains are required for the GTPase activity, for replacement of GDP by GTP, and for G protein-effector interaction.</text>
</comment>
<comment type="subunit">
    <text>G proteins are composed of 3 units, alpha, beta and gamma.</text>
</comment>
<comment type="subcellular location">
    <subcellularLocation>
        <location evidence="3">Cell membrane</location>
        <topology evidence="3">Lipid-anchor</topology>
        <orientation evidence="3">Cytoplasmic side</orientation>
    </subcellularLocation>
</comment>
<comment type="similarity">
    <text evidence="3">Belongs to the G protein gamma family.</text>
</comment>
<name>GBGT2_BOVIN</name>